<accession>B1LK77</accession>
<protein>
    <recommendedName>
        <fullName evidence="1">Deoxyuridine 5'-triphosphate nucleotidohydrolase</fullName>
        <shortName evidence="1">dUTPase</shortName>
        <ecNumber evidence="1">3.6.1.23</ecNumber>
    </recommendedName>
    <alternativeName>
        <fullName evidence="1">dUTP pyrophosphatase</fullName>
    </alternativeName>
</protein>
<keyword id="KW-0378">Hydrolase</keyword>
<keyword id="KW-0460">Magnesium</keyword>
<keyword id="KW-0479">Metal-binding</keyword>
<keyword id="KW-0546">Nucleotide metabolism</keyword>
<feature type="chain" id="PRO_1000117568" description="Deoxyuridine 5'-triphosphate nucleotidohydrolase">
    <location>
        <begin position="1"/>
        <end position="152"/>
    </location>
</feature>
<feature type="binding site" evidence="1">
    <location>
        <begin position="71"/>
        <end position="73"/>
    </location>
    <ligand>
        <name>substrate</name>
    </ligand>
</feature>
<feature type="binding site" evidence="1">
    <location>
        <position position="84"/>
    </location>
    <ligand>
        <name>substrate</name>
    </ligand>
</feature>
<feature type="binding site" evidence="1">
    <location>
        <begin position="88"/>
        <end position="90"/>
    </location>
    <ligand>
        <name>substrate</name>
    </ligand>
</feature>
<feature type="binding site" evidence="1">
    <location>
        <position position="98"/>
    </location>
    <ligand>
        <name>substrate</name>
    </ligand>
</feature>
<proteinExistence type="inferred from homology"/>
<name>DUT_ECOSM</name>
<dbReference type="EC" id="3.6.1.23" evidence="1"/>
<dbReference type="EMBL" id="CP000970">
    <property type="protein sequence ID" value="ACB18936.1"/>
    <property type="molecule type" value="Genomic_DNA"/>
</dbReference>
<dbReference type="RefSeq" id="WP_000976070.1">
    <property type="nucleotide sequence ID" value="NC_010498.1"/>
</dbReference>
<dbReference type="SMR" id="B1LK77"/>
<dbReference type="GeneID" id="93778355"/>
<dbReference type="KEGG" id="ecm:EcSMS35_3975"/>
<dbReference type="HOGENOM" id="CLU_068508_1_1_6"/>
<dbReference type="UniPathway" id="UPA00610">
    <property type="reaction ID" value="UER00666"/>
</dbReference>
<dbReference type="Proteomes" id="UP000007011">
    <property type="component" value="Chromosome"/>
</dbReference>
<dbReference type="GO" id="GO:0004170">
    <property type="term" value="F:dUTP diphosphatase activity"/>
    <property type="evidence" value="ECO:0007669"/>
    <property type="project" value="UniProtKB-UniRule"/>
</dbReference>
<dbReference type="GO" id="GO:0000287">
    <property type="term" value="F:magnesium ion binding"/>
    <property type="evidence" value="ECO:0007669"/>
    <property type="project" value="UniProtKB-UniRule"/>
</dbReference>
<dbReference type="GO" id="GO:0006226">
    <property type="term" value="P:dUMP biosynthetic process"/>
    <property type="evidence" value="ECO:0007669"/>
    <property type="project" value="UniProtKB-UniRule"/>
</dbReference>
<dbReference type="GO" id="GO:0046081">
    <property type="term" value="P:dUTP catabolic process"/>
    <property type="evidence" value="ECO:0007669"/>
    <property type="project" value="InterPro"/>
</dbReference>
<dbReference type="CDD" id="cd07557">
    <property type="entry name" value="trimeric_dUTPase"/>
    <property type="match status" value="1"/>
</dbReference>
<dbReference type="FunFam" id="2.70.40.10:FF:000002">
    <property type="entry name" value="dUTP diphosphatase"/>
    <property type="match status" value="1"/>
</dbReference>
<dbReference type="Gene3D" id="2.70.40.10">
    <property type="match status" value="1"/>
</dbReference>
<dbReference type="HAMAP" id="MF_00116">
    <property type="entry name" value="dUTPase_bact"/>
    <property type="match status" value="1"/>
</dbReference>
<dbReference type="InterPro" id="IPR008181">
    <property type="entry name" value="dUTPase"/>
</dbReference>
<dbReference type="InterPro" id="IPR029054">
    <property type="entry name" value="dUTPase-like"/>
</dbReference>
<dbReference type="InterPro" id="IPR036157">
    <property type="entry name" value="dUTPase-like_sf"/>
</dbReference>
<dbReference type="InterPro" id="IPR033704">
    <property type="entry name" value="dUTPase_trimeric"/>
</dbReference>
<dbReference type="NCBIfam" id="TIGR00576">
    <property type="entry name" value="dut"/>
    <property type="match status" value="1"/>
</dbReference>
<dbReference type="NCBIfam" id="NF001862">
    <property type="entry name" value="PRK00601.1"/>
    <property type="match status" value="1"/>
</dbReference>
<dbReference type="PANTHER" id="PTHR11241">
    <property type="entry name" value="DEOXYURIDINE 5'-TRIPHOSPHATE NUCLEOTIDOHYDROLASE"/>
    <property type="match status" value="1"/>
</dbReference>
<dbReference type="PANTHER" id="PTHR11241:SF0">
    <property type="entry name" value="DEOXYURIDINE 5'-TRIPHOSPHATE NUCLEOTIDOHYDROLASE"/>
    <property type="match status" value="1"/>
</dbReference>
<dbReference type="Pfam" id="PF00692">
    <property type="entry name" value="dUTPase"/>
    <property type="match status" value="1"/>
</dbReference>
<dbReference type="SUPFAM" id="SSF51283">
    <property type="entry name" value="dUTPase-like"/>
    <property type="match status" value="1"/>
</dbReference>
<evidence type="ECO:0000255" key="1">
    <source>
        <dbReference type="HAMAP-Rule" id="MF_00116"/>
    </source>
</evidence>
<organism>
    <name type="scientific">Escherichia coli (strain SMS-3-5 / SECEC)</name>
    <dbReference type="NCBI Taxonomy" id="439855"/>
    <lineage>
        <taxon>Bacteria</taxon>
        <taxon>Pseudomonadati</taxon>
        <taxon>Pseudomonadota</taxon>
        <taxon>Gammaproteobacteria</taxon>
        <taxon>Enterobacterales</taxon>
        <taxon>Enterobacteriaceae</taxon>
        <taxon>Escherichia</taxon>
    </lineage>
</organism>
<reference key="1">
    <citation type="journal article" date="2008" name="J. Bacteriol.">
        <title>Insights into the environmental resistance gene pool from the genome sequence of the multidrug-resistant environmental isolate Escherichia coli SMS-3-5.</title>
        <authorList>
            <person name="Fricke W.F."/>
            <person name="Wright M.S."/>
            <person name="Lindell A.H."/>
            <person name="Harkins D.M."/>
            <person name="Baker-Austin C."/>
            <person name="Ravel J."/>
            <person name="Stepanauskas R."/>
        </authorList>
    </citation>
    <scope>NUCLEOTIDE SEQUENCE [LARGE SCALE GENOMIC DNA]</scope>
    <source>
        <strain>SMS-3-5 / SECEC</strain>
    </source>
</reference>
<sequence length="152" mass="16288">MMKKIDVKILDPRVGKEFPLPTYATSGSAGLDLRACLDDAVELAPGDTTLVPTGLAIHIADPSLAAMMLPRSGLGHKHGIVLGNLVGLIDSDYQGQLMISVWNRGQDSFTIQPGERIAQMIFVPVVQAEFNLVEDFDATDRGEGGFGHSGRQ</sequence>
<comment type="function">
    <text evidence="1">This enzyme is involved in nucleotide metabolism: it produces dUMP, the immediate precursor of thymidine nucleotides and it decreases the intracellular concentration of dUTP so that uracil cannot be incorporated into DNA.</text>
</comment>
<comment type="catalytic activity">
    <reaction evidence="1">
        <text>dUTP + H2O = dUMP + diphosphate + H(+)</text>
        <dbReference type="Rhea" id="RHEA:10248"/>
        <dbReference type="ChEBI" id="CHEBI:15377"/>
        <dbReference type="ChEBI" id="CHEBI:15378"/>
        <dbReference type="ChEBI" id="CHEBI:33019"/>
        <dbReference type="ChEBI" id="CHEBI:61555"/>
        <dbReference type="ChEBI" id="CHEBI:246422"/>
        <dbReference type="EC" id="3.6.1.23"/>
    </reaction>
</comment>
<comment type="cofactor">
    <cofactor evidence="1">
        <name>Mg(2+)</name>
        <dbReference type="ChEBI" id="CHEBI:18420"/>
    </cofactor>
</comment>
<comment type="pathway">
    <text evidence="1">Pyrimidine metabolism; dUMP biosynthesis; dUMP from dCTP (dUTP route): step 2/2.</text>
</comment>
<comment type="subunit">
    <text evidence="1">Homotrimer.</text>
</comment>
<comment type="similarity">
    <text evidence="1">Belongs to the dUTPase family.</text>
</comment>
<gene>
    <name evidence="1" type="primary">dut</name>
    <name type="ordered locus">EcSMS35_3975</name>
</gene>